<comment type="catalytic activity">
    <reaction>
        <text>3-oxoadipate + succinyl-CoA = 3-oxoadipyl-CoA + succinate</text>
        <dbReference type="Rhea" id="RHEA:12048"/>
        <dbReference type="ChEBI" id="CHEBI:15775"/>
        <dbReference type="ChEBI" id="CHEBI:30031"/>
        <dbReference type="ChEBI" id="CHEBI:57292"/>
        <dbReference type="ChEBI" id="CHEBI:57348"/>
        <dbReference type="EC" id="2.8.3.6"/>
    </reaction>
</comment>
<comment type="pathway">
    <text>Aromatic compound metabolism; beta-ketoadipate pathway; acetyl-CoA and succinyl-CoA from 3-oxoadipate: step 1/2.</text>
</comment>
<comment type="subunit">
    <text evidence="1">Heterodimer.</text>
</comment>
<comment type="similarity">
    <text evidence="3">Belongs to the 3-oxoacid CoA-transferase subunit B family.</text>
</comment>
<reference key="1">
    <citation type="journal article" date="1994" name="Gene">
        <title>Contrasting patterns of evolutionary divergence within the Acinetobacter calcoaceticus pca operon.</title>
        <authorList>
            <person name="Kowalchuk G.A."/>
            <person name="Hartnett G.B."/>
            <person name="Benson A."/>
            <person name="Houghton J.E."/>
            <person name="Ngai K.-L."/>
            <person name="Ornston L.N."/>
        </authorList>
    </citation>
    <scope>NUCLEOTIDE SEQUENCE [GENOMIC DNA]</scope>
    <scope>PROTEIN SEQUENCE OF 1-38 (PCAJ)</scope>
</reference>
<reference key="2">
    <citation type="journal article" date="1994" name="Gene">
        <title>Unusual G + C content and codon usage in catIJF, a segment of the ben-cat supra-operonic cluster in the Acinetobacter calcoaceticus chromosome.</title>
        <authorList>
            <person name="Shanley M.S."/>
            <person name="Harrison A."/>
            <person name="Parales R.E."/>
            <person name="Kowalchuk G."/>
            <person name="Mitchell D.J."/>
            <person name="Ornston L.N."/>
        </authorList>
    </citation>
    <scope>NUCLEOTIDE SEQUENCE [GENOMIC DNA] (CATJ)</scope>
</reference>
<reference key="3">
    <citation type="journal article" date="2004" name="Nucleic Acids Res.">
        <title>Unique features revealed by the genome sequence of Acinetobacter sp. ADP1, a versatile and naturally transformation competent bacterium.</title>
        <authorList>
            <person name="Barbe V."/>
            <person name="Vallenet D."/>
            <person name="Fonknechten N."/>
            <person name="Kreimeyer A."/>
            <person name="Oztas S."/>
            <person name="Labarre L."/>
            <person name="Cruveiller S."/>
            <person name="Robert C."/>
            <person name="Duprat S."/>
            <person name="Wincker P."/>
            <person name="Ornston L.N."/>
            <person name="Weissenbach J."/>
            <person name="Marliere P."/>
            <person name="Cohen G.N."/>
            <person name="Medigue C."/>
        </authorList>
    </citation>
    <scope>NUCLEOTIDE SEQUENCE [LARGE SCALE GENOMIC DNA] (PCAJ AND CATJ)</scope>
    <source>
        <strain>ATCC 33305 / BD413 / ADP1</strain>
    </source>
</reference>
<evidence type="ECO:0000250" key="1"/>
<evidence type="ECO:0000255" key="2">
    <source>
        <dbReference type="PROSITE-ProRule" id="PRU10034"/>
    </source>
</evidence>
<evidence type="ECO:0000305" key="3"/>
<organism>
    <name type="scientific">Acinetobacter baylyi (strain ATCC 33305 / BD413 / ADP1)</name>
    <dbReference type="NCBI Taxonomy" id="62977"/>
    <lineage>
        <taxon>Bacteria</taxon>
        <taxon>Pseudomonadati</taxon>
        <taxon>Pseudomonadota</taxon>
        <taxon>Gammaproteobacteria</taxon>
        <taxon>Moraxellales</taxon>
        <taxon>Moraxellaceae</taxon>
        <taxon>Acinetobacter</taxon>
    </lineage>
</organism>
<name>PCAJ_ACIAD</name>
<keyword id="KW-0058">Aromatic hydrocarbons catabolism</keyword>
<keyword id="KW-0903">Direct protein sequencing</keyword>
<keyword id="KW-0808">Transferase</keyword>
<dbReference type="EC" id="2.8.3.6"/>
<dbReference type="EMBL" id="L05770">
    <property type="protein sequence ID" value="AAC37147.1"/>
    <property type="molecule type" value="Genomic_DNA"/>
</dbReference>
<dbReference type="EMBL" id="AF009224">
    <property type="protein sequence ID" value="AAC46433.1"/>
    <property type="molecule type" value="Genomic_DNA"/>
</dbReference>
<dbReference type="EMBL" id="CR543861">
    <property type="protein sequence ID" value="CAG68312.1"/>
    <property type="molecule type" value="Genomic_DNA"/>
</dbReference>
<dbReference type="EMBL" id="CR543861">
    <property type="protein sequence ID" value="CAG68547.1"/>
    <property type="molecule type" value="Genomic_DNA"/>
</dbReference>
<dbReference type="PIR" id="B44570">
    <property type="entry name" value="B44570"/>
</dbReference>
<dbReference type="RefSeq" id="WP_004925445.1">
    <property type="nucleotide sequence ID" value="NC_005966.1"/>
</dbReference>
<dbReference type="SMR" id="Q59091"/>
<dbReference type="STRING" id="202950.GCA_001485005_03350"/>
<dbReference type="GeneID" id="67510887"/>
<dbReference type="KEGG" id="aci:ACIAD1449"/>
<dbReference type="KEGG" id="aci:ACIAD1705"/>
<dbReference type="eggNOG" id="COG2057">
    <property type="taxonomic scope" value="Bacteria"/>
</dbReference>
<dbReference type="HOGENOM" id="CLU_019942_4_1_6"/>
<dbReference type="OrthoDB" id="9778604at2"/>
<dbReference type="BioCyc" id="ASP62977:ACIAD_RS06695-MONOMER"/>
<dbReference type="BioCyc" id="ASP62977:ACIAD_RS07855-MONOMER"/>
<dbReference type="UniPathway" id="UPA00157">
    <property type="reaction ID" value="UER00262"/>
</dbReference>
<dbReference type="Proteomes" id="UP000000430">
    <property type="component" value="Chromosome"/>
</dbReference>
<dbReference type="GO" id="GO:0047569">
    <property type="term" value="F:3-oxoadipate CoA-transferase activity"/>
    <property type="evidence" value="ECO:0007669"/>
    <property type="project" value="UniProtKB-EC"/>
</dbReference>
<dbReference type="GO" id="GO:0042952">
    <property type="term" value="P:beta-ketoadipate pathway"/>
    <property type="evidence" value="ECO:0007669"/>
    <property type="project" value="UniProtKB-UniPathway"/>
</dbReference>
<dbReference type="Gene3D" id="3.40.1080.10">
    <property type="entry name" value="Glutaconate Coenzyme A-transferase"/>
    <property type="match status" value="1"/>
</dbReference>
<dbReference type="InterPro" id="IPR012791">
    <property type="entry name" value="3-oxoacid_CoA-transf_B"/>
</dbReference>
<dbReference type="InterPro" id="IPR004165">
    <property type="entry name" value="CoA_trans_fam_I"/>
</dbReference>
<dbReference type="InterPro" id="IPR004164">
    <property type="entry name" value="CoA_transf_AS"/>
</dbReference>
<dbReference type="InterPro" id="IPR037171">
    <property type="entry name" value="NagB/RpiA_transferase-like"/>
</dbReference>
<dbReference type="NCBIfam" id="TIGR02428">
    <property type="entry name" value="pcaJ_scoB_fam"/>
    <property type="match status" value="1"/>
</dbReference>
<dbReference type="PANTHER" id="PTHR13707:SF60">
    <property type="entry name" value="ACETATE COA-TRANSFERASE SUBUNIT ALPHA"/>
    <property type="match status" value="1"/>
</dbReference>
<dbReference type="PANTHER" id="PTHR13707">
    <property type="entry name" value="KETOACID-COENZYME A TRANSFERASE"/>
    <property type="match status" value="1"/>
</dbReference>
<dbReference type="Pfam" id="PF01144">
    <property type="entry name" value="CoA_trans"/>
    <property type="match status" value="1"/>
</dbReference>
<dbReference type="SMART" id="SM00882">
    <property type="entry name" value="CoA_trans"/>
    <property type="match status" value="1"/>
</dbReference>
<dbReference type="SUPFAM" id="SSF100950">
    <property type="entry name" value="NagB/RpiA/CoA transferase-like"/>
    <property type="match status" value="1"/>
</dbReference>
<dbReference type="PROSITE" id="PS01274">
    <property type="entry name" value="COA_TRANSF_2"/>
    <property type="match status" value="1"/>
</dbReference>
<accession>Q59091</accession>
<accession>Q43934</accession>
<gene>
    <name type="primary">pcaJ</name>
    <name type="ordered locus">ACIAD1705</name>
</gene>
<gene>
    <name type="primary">catJ</name>
    <name type="ordered locus">ACIAD1449</name>
</gene>
<protein>
    <recommendedName>
        <fullName>3-oxoadipate CoA-transferase subunit B</fullName>
        <ecNumber>2.8.3.6</ecNumber>
    </recommendedName>
    <alternativeName>
        <fullName>Beta-ketoadipate:succinyl-CoA transferase subunit B</fullName>
    </alternativeName>
</protein>
<sequence length="217" mass="23165">MSYHKLTRDQIAQRVAQDIPEGSYVNLGIGLPTKIASYLPADKDVFLHSENGLLAFGPPPAAGEEDPELINAGKEYVTMLEGGCFFHHGDSFAMMRGGHLDICVLGAFQIAANGDLANWHTGAPDAIPSVGGAMDLAVGAKKVFVTTDHVTKKGEPKIVAELTYPATGQKCVDRIYTDLCIIDVVPEGLKVIEKVEGLSFEELQRLTGATLIDATQG</sequence>
<feature type="chain" id="PRO_0000157917" description="3-oxoadipate CoA-transferase subunit B">
    <location>
        <begin position="1"/>
        <end position="217"/>
    </location>
</feature>
<feature type="active site" evidence="2">
    <location>
        <position position="50"/>
    </location>
</feature>
<feature type="sequence conflict" description="In Ref. 1; AAC37147." evidence="3" ref="1">
    <original>L</original>
    <variation>LM</variation>
    <location>
        <position position="39"/>
    </location>
</feature>
<proteinExistence type="evidence at protein level"/>